<keyword id="KW-0084">Basement membrane</keyword>
<keyword id="KW-0965">Cell junction</keyword>
<keyword id="KW-0966">Cell projection</keyword>
<keyword id="KW-1015">Disulfide bond</keyword>
<keyword id="KW-0272">Extracellular matrix</keyword>
<keyword id="KW-0325">Glycoprotein</keyword>
<keyword id="KW-0479">Metal-binding</keyword>
<keyword id="KW-0524">Neurogenesis</keyword>
<keyword id="KW-1185">Reference proteome</keyword>
<keyword id="KW-0964">Secreted</keyword>
<keyword id="KW-0732">Signal</keyword>
<keyword id="KW-0862">Zinc</keyword>
<reference evidence="8" key="1">
    <citation type="journal article" date="2016" name="Curr. Biol.">
        <title>Muscle- and Skin-Derived Cues Jointly Orchestrate Patterning of Somatosensory Dendrites.</title>
        <authorList>
            <person name="Diaz-Balzac C.A."/>
            <person name="Rahman M."/>
            <person name="Lazaro-Pena M.I."/>
            <person name="Martin Hernandez L.A."/>
            <person name="Salzberg Y."/>
            <person name="Aguirre-Chen C."/>
            <person name="Kaprielian Z."/>
            <person name="Buelow H.E."/>
        </authorList>
    </citation>
    <scope>NUCLEOTIDE SEQUENCE [MRNA]</scope>
    <scope>FUNCTION</scope>
    <scope>SUBCELLULAR LOCATION</scope>
    <scope>TISSUE SPECIFICITY</scope>
    <scope>DEVELOPMENTAL STAGE</scope>
    <scope>MUTAGENESIS OF HIS-67; ALA-74; ILE-101; GLY-133; VAL-153; ASN-244 AND ASP-262</scope>
</reference>
<reference evidence="6" key="2">
    <citation type="journal article" date="2016" name="Curr. Biol.">
        <title>Muscle- and Skin-Derived Cues Jointly Orchestrate Patterning of Somatosensory Dendrites.</title>
        <authorList>
            <person name="Diaz-Balzac C.A."/>
            <person name="Rahman M."/>
            <person name="Lazaro-Pena M.I."/>
            <person name="Martin Hernandez L.A."/>
            <person name="Salzberg Y."/>
            <person name="Aguirre-Chen C."/>
            <person name="Kaprielian Z."/>
            <person name="Buelow H.E."/>
        </authorList>
    </citation>
    <scope>ERRATUM OF PUBMED:27451901</scope>
</reference>
<reference evidence="9" key="3">
    <citation type="journal article" date="1998" name="Science">
        <title>Genome sequence of the nematode C. elegans: a platform for investigating biology.</title>
        <authorList>
            <consortium name="The C. elegans sequencing consortium"/>
        </authorList>
    </citation>
    <scope>NUCLEOTIDE SEQUENCE [LARGE SCALE GENOMIC DNA]</scope>
    <source>
        <strain evidence="9">Bristol N2</strain>
    </source>
</reference>
<reference evidence="6" key="4">
    <citation type="journal article" date="2016" name="Elife">
        <title>A multi-protein receptor-ligand complex underlies combinatorial dendrite guidance choices in C. elegans.</title>
        <authorList>
            <person name="Zou W."/>
            <person name="Shen A."/>
            <person name="Dong X."/>
            <person name="Tugizova M."/>
            <person name="Xiang Y.K."/>
            <person name="Shen K."/>
        </authorList>
    </citation>
    <scope>FUNCTION</scope>
    <scope>IDENTIFICATION IN COMPLEX WITH DMA-1; MNR-1 AND SAX-7</scope>
    <scope>INTERACTION WITH SAX-7</scope>
    <scope>SUBCELLULAR LOCATION</scope>
    <scope>TISSUE SPECIFICITY</scope>
    <scope>DEVELOPMENTAL STAGE</scope>
    <scope>MUTAGENESIS OF GLY-103 AND GLY-259</scope>
</reference>
<evidence type="ECO:0000250" key="1">
    <source>
        <dbReference type="UniProtKB" id="O14960"/>
    </source>
</evidence>
<evidence type="ECO:0000255" key="2"/>
<evidence type="ECO:0000255" key="3">
    <source>
        <dbReference type="PROSITE-ProRule" id="PRU00498"/>
    </source>
</evidence>
<evidence type="ECO:0000269" key="4">
    <source>
    </source>
</evidence>
<evidence type="ECO:0000269" key="5">
    <source>
    </source>
</evidence>
<evidence type="ECO:0000305" key="6"/>
<evidence type="ECO:0000305" key="7">
    <source>
    </source>
</evidence>
<evidence type="ECO:0000312" key="8">
    <source>
        <dbReference type="EMBL" id="ANS57217.1"/>
    </source>
</evidence>
<evidence type="ECO:0000312" key="9">
    <source>
        <dbReference type="Proteomes" id="UP000001940"/>
    </source>
</evidence>
<evidence type="ECO:0000312" key="10">
    <source>
        <dbReference type="WormBase" id="K05F1.5"/>
    </source>
</evidence>
<dbReference type="EMBL" id="KX255656">
    <property type="protein sequence ID" value="ANS57217.1"/>
    <property type="molecule type" value="mRNA"/>
</dbReference>
<dbReference type="EMBL" id="BX284602">
    <property type="protein sequence ID" value="CCD69144.2"/>
    <property type="molecule type" value="Genomic_DNA"/>
</dbReference>
<dbReference type="PIR" id="T16566">
    <property type="entry name" value="T16566"/>
</dbReference>
<dbReference type="RefSeq" id="NP_495141.2">
    <property type="nucleotide sequence ID" value="NM_062740.8"/>
</dbReference>
<dbReference type="SMR" id="Q21241"/>
<dbReference type="FunCoup" id="Q21241">
    <property type="interactions" value="2"/>
</dbReference>
<dbReference type="STRING" id="6239.K05F1.5.2"/>
<dbReference type="GlyCosmos" id="Q21241">
    <property type="glycosylation" value="1 site, No reported glycans"/>
</dbReference>
<dbReference type="PaxDb" id="6239-K05F1.5"/>
<dbReference type="PeptideAtlas" id="Q21241"/>
<dbReference type="EnsemblMetazoa" id="K05F1.5.1">
    <property type="protein sequence ID" value="K05F1.5.1"/>
    <property type="gene ID" value="WBGene00019407"/>
</dbReference>
<dbReference type="GeneID" id="173978"/>
<dbReference type="KEGG" id="cel:CELE_K05F1.5"/>
<dbReference type="UCSC" id="K05F1.5">
    <property type="organism name" value="c. elegans"/>
</dbReference>
<dbReference type="AGR" id="WB:WBGene00019407"/>
<dbReference type="CTD" id="173978"/>
<dbReference type="WormBase" id="K05F1.5">
    <property type="protein sequence ID" value="CE51789"/>
    <property type="gene ID" value="WBGene00019407"/>
    <property type="gene designation" value="lect-2"/>
</dbReference>
<dbReference type="eggNOG" id="KOG4377">
    <property type="taxonomic scope" value="Eukaryota"/>
</dbReference>
<dbReference type="GeneTree" id="ENSGT00390000015484"/>
<dbReference type="HOGENOM" id="CLU_046042_0_0_1"/>
<dbReference type="InParanoid" id="Q21241"/>
<dbReference type="OrthoDB" id="5911921at2759"/>
<dbReference type="PRO" id="PR:Q21241"/>
<dbReference type="Proteomes" id="UP000001940">
    <property type="component" value="Chromosome II"/>
</dbReference>
<dbReference type="Bgee" id="WBGene00019407">
    <property type="expression patterns" value="Expressed in embryo and 3 other cell types or tissues"/>
</dbReference>
<dbReference type="GO" id="GO:0070161">
    <property type="term" value="C:anchoring junction"/>
    <property type="evidence" value="ECO:0007669"/>
    <property type="project" value="UniProtKB-SubCell"/>
</dbReference>
<dbReference type="GO" id="GO:0005604">
    <property type="term" value="C:basement membrane"/>
    <property type="evidence" value="ECO:0000314"/>
    <property type="project" value="UniProtKB"/>
</dbReference>
<dbReference type="GO" id="GO:0009986">
    <property type="term" value="C:cell surface"/>
    <property type="evidence" value="ECO:0000314"/>
    <property type="project" value="UniProtKB"/>
</dbReference>
<dbReference type="GO" id="GO:0005576">
    <property type="term" value="C:extracellular region"/>
    <property type="evidence" value="ECO:0007669"/>
    <property type="project" value="UniProtKB-SubCell"/>
</dbReference>
<dbReference type="GO" id="GO:0043204">
    <property type="term" value="C:perikaryon"/>
    <property type="evidence" value="ECO:0000314"/>
    <property type="project" value="UniProtKB"/>
</dbReference>
<dbReference type="GO" id="GO:0071683">
    <property type="term" value="C:sensory dendrite"/>
    <property type="evidence" value="ECO:0000314"/>
    <property type="project" value="UniProtKB"/>
</dbReference>
<dbReference type="GO" id="GO:0046872">
    <property type="term" value="F:metal ion binding"/>
    <property type="evidence" value="ECO:0007669"/>
    <property type="project" value="UniProtKB-KW"/>
</dbReference>
<dbReference type="GO" id="GO:0060384">
    <property type="term" value="P:innervation"/>
    <property type="evidence" value="ECO:0000315"/>
    <property type="project" value="UniProtKB"/>
</dbReference>
<dbReference type="GO" id="GO:1903859">
    <property type="term" value="P:regulation of dendrite extension"/>
    <property type="evidence" value="ECO:0000315"/>
    <property type="project" value="UniProtKB"/>
</dbReference>
<dbReference type="GO" id="GO:0048814">
    <property type="term" value="P:regulation of dendrite morphogenesis"/>
    <property type="evidence" value="ECO:0000315"/>
    <property type="project" value="UniProtKB"/>
</dbReference>
<dbReference type="Gene3D" id="2.70.70.10">
    <property type="entry name" value="Glucose Permease (Domain IIA)"/>
    <property type="match status" value="1"/>
</dbReference>
<dbReference type="InterPro" id="IPR011055">
    <property type="entry name" value="Dup_hybrid_motif"/>
</dbReference>
<dbReference type="InterPro" id="IPR008663">
    <property type="entry name" value="LECT2"/>
</dbReference>
<dbReference type="InterPro" id="IPR016047">
    <property type="entry name" value="Peptidase_M23"/>
</dbReference>
<dbReference type="PANTHER" id="PTHR11329">
    <property type="entry name" value="LEUKOCYTE CELL-DERIVED CHEMOTAXIN 2"/>
    <property type="match status" value="1"/>
</dbReference>
<dbReference type="PANTHER" id="PTHR11329:SF0">
    <property type="entry name" value="LEUKOCYTE CELL-DERIVED CHEMOTAXIN-2"/>
    <property type="match status" value="1"/>
</dbReference>
<dbReference type="Pfam" id="PF01551">
    <property type="entry name" value="Peptidase_M23"/>
    <property type="match status" value="1"/>
</dbReference>
<gene>
    <name evidence="10" type="primary">lect-2</name>
    <name evidence="10" type="ORF">K05F1.5</name>
</gene>
<sequence length="335" mass="37489">MHLRTLHFLILIGIFIGGQTLGCMKKVCGNNAKNDFRRCPDTDGSCGNYHTERTSGEIIDGVDVRCHLGEPIYAPIEGEMYFWRPYGGKREKSCADQGVRIEGTGQWQGYAVHISSVKLSFFGGHVEAGDEIGEALNRYCFNDRGQNDVEPHVEIRLYKEGRLIDPTHHLQNCMCTGQICESNTRNVLLGDPFKTDKRYNGVRGWDVECQMIDDDDEDSPRAPMIYSPIAGEIVGRIRLFTDSNGAYTGCDNDGIFIVGIDDWLGFEARLYNVKARADIGFGRKRIIQGEPIATRLACENSPDSVFVEIRFEGRVVNITDIITAANCKTPNFPVF</sequence>
<comment type="function">
    <text evidence="4 5">Muscle-derived dendritic guidance cue, which is required for the formation of somatosensory dendritic arbors which extend from PVD and FLP sensory neurons during development (PubMed:27451901). Ligand of a multi-protein dma-1 receptor-ligand complex, which is activated upon binding of lect-2, mnr-1 and sax-7 ligands to control the growth of dendrites that extend anteriorly from the PVD neuronal cell body (PubMed:27451901, PubMed:27705746). Enhances the binding of the mnr-1 and sax-7 ligands to the dma-1 receptor-ligand complex (PubMed:27705746). Restricts the growth of secondary PVD dendritic branches and any irregularly positioned ectopic tertiary dendritic branches that originate from secondary branches, and promotes the formation of stable higher order dendritic branches (PubMed:27451901, PubMed:27705746). In particular, it is required for the formation of quaternary PVD dendritic branches and promotes their innervation of body wall muscles (PubMed:27705746). Promotes self-avoidance of tertiary dendritic branches of PVD sensory neurons (PubMed:27451901). Not required for the growth of dendrites that extend from AIY and PVQ interneurons, DVB GABergic neurons, PLM and ALM mechanosensory neurons, AFD sensory neurons and DD/VD and DA/DB motor neurons (PubMed:27451901).</text>
</comment>
<comment type="subunit">
    <text evidence="5">Component of a multi-protein dma-1 receptor-ligand complex, which is activated upon binding of lect-2, mnr-1 and sax-7 ligands to promote the morphogenesis of dendrites which extend from the PVD neuronal body (PubMed:27705746). Within the complex interacts with sax-7; the interaction is required for lect-2 dendritic localization and enhances the binding of the mnr-1 and sax-7 ligands to the dma-1 receptor-ligand complex (PubMed:27705746).</text>
</comment>
<comment type="subcellular location">
    <subcellularLocation>
        <location evidence="4 5">Secreted</location>
    </subcellularLocation>
    <subcellularLocation>
        <location evidence="4">Cell junction</location>
    </subcellularLocation>
    <subcellularLocation>
        <location evidence="4">Secreted</location>
        <location evidence="4">Extracellular space</location>
        <location evidence="4">Extracellular matrix</location>
        <location evidence="4">Basement membrane</location>
    </subcellularLocation>
    <subcellularLocation>
        <location evidence="4 5">Cell projection</location>
        <location evidence="4 5">Dendrite</location>
    </subcellularLocation>
    <subcellularLocation>
        <location evidence="4">Perikaryon</location>
    </subcellularLocation>
    <subcellularLocation>
        <location evidence="4">Cell surface</location>
    </subcellularLocation>
    <text evidence="4 5">Secreted by body wall muscles and taken up by coelomocytes (PubMed:27451901, PubMed:27705746). Localizes to the basement membrane of hypodermal tissues, body wall muscles and along fibrous organelles in larvae and adults (PubMed:27451901). Co-localizes with sax-7 at dendrites (PubMed:27451901, PubMed:27705746). Dendritic localization is dependent on sax-7, but not mnr-1 or dma-1 (PubMed:27451901, PubMed:27705746).</text>
</comment>
<comment type="tissue specificity">
    <text evidence="4 5">Expressed in body wall muscle cells, along the boundary of the lateral hypodermis, seam cells, processes of the nervous system including commissures, sensory dendrites in the head, and lateral nerve tracts, and motor neurons and some mechanosensory neurons such as ALM.</text>
</comment>
<comment type="developmental stage">
    <text evidence="4 5">Expressed throughout development (PubMed:27451901). Diffusely expressed from the gastrula stage to the 3-fold embryonic stage (PubMed:27451901). In larvae, expressed in hypodermal tissues and processes of the nervous system, including commissures, sensory dendrites in the head, and lateral nerve tracts (PubMed:27451901). In L3 and L4 stage larvae, mainly expressed in body wall muscles, and it is also expressed in head neurons and ventral nerve cord neurons (PubMed:27705746).</text>
</comment>
<comment type="similarity">
    <text evidence="6">Belongs to the LECT2/MIM-1 family.</text>
</comment>
<protein>
    <recommendedName>
        <fullName evidence="10">Leukocyte cell-derived chemotaxin-2 homolog</fullName>
    </recommendedName>
    <alternativeName>
        <fullName evidence="7">Chondromodulin II</fullName>
    </alternativeName>
</protein>
<feature type="signal peptide" evidence="2">
    <location>
        <begin position="1"/>
        <end position="20"/>
    </location>
</feature>
<feature type="chain" id="PRO_5015097204" description="Leukocyte cell-derived chemotaxin-2 homolog">
    <location>
        <begin position="21"/>
        <end position="335"/>
    </location>
</feature>
<feature type="binding site" evidence="1">
    <location>
        <position position="63"/>
    </location>
    <ligand>
        <name>Zn(2+)</name>
        <dbReference type="ChEBI" id="CHEBI:29105"/>
    </ligand>
</feature>
<feature type="glycosylation site" description="N-linked (GlcNAc...) asparagine" evidence="3">
    <location>
        <position position="317"/>
    </location>
</feature>
<feature type="disulfide bond" evidence="1">
    <location>
        <begin position="28"/>
        <end position="66"/>
    </location>
</feature>
<feature type="disulfide bond" evidence="1">
    <location>
        <begin position="39"/>
        <end position="46"/>
    </location>
</feature>
<feature type="mutagenesis site" description="In gk660807; does not cause defects in the formation of the somatosensory dendritic arbor of PVD sensory neurons." evidence="4">
    <original>H</original>
    <variation>L</variation>
    <location>
        <position position="67"/>
    </location>
</feature>
<feature type="mutagenesis site" description="In gk751884; does not cause defects in the formation of the somatosensory dendritic arbor of PVD sensory neurons." evidence="4">
    <original>A</original>
    <variation>V</variation>
    <location>
        <position position="74"/>
    </location>
</feature>
<feature type="mutagenesis site" description="In gk609178; defective formation of the somatosensory dendritic arbor of PVD sensory neurons." evidence="4">
    <original>I</original>
    <variation>T</variation>
    <location>
        <position position="101"/>
    </location>
</feature>
<feature type="mutagenesis site" description="In wy953; defective formation of the somatosensory dendritic arbor of PVD sensory neurons. Secondary dendrites that extend from the PVD neuronal cell body are disorganized and fail to form 'T' shaped tertiary dendrites, and furthermore no quaternary dendritic branches are formed." evidence="5">
    <original>G</original>
    <variation>E</variation>
    <location>
        <position position="103"/>
    </location>
</feature>
<feature type="mutagenesis site" description="In dz203 and gk606935; defective formation of the somatosensory dendritic arbor of PVD sensory neurons." evidence="4">
    <original>G</original>
    <variation>E</variation>
    <location>
        <position position="133"/>
    </location>
</feature>
<feature type="mutagenesis site" description="In gk864764; defective formation of the somatosensory dendritic arbor of PVD sensory neurons." evidence="4">
    <original>V</original>
    <variation>D</variation>
    <location>
        <position position="153"/>
    </location>
</feature>
<feature type="mutagenesis site" description="In gk808537; does not cause defects in the formation of the somatosensory dendritic arbor of PVD sensory neurons." evidence="4">
    <original>N</original>
    <variation>K</variation>
    <location>
        <position position="244"/>
    </location>
</feature>
<feature type="mutagenesis site" description="In wy935; defective formation of the somatosensory dendritic arbor of PVD sensory neurons. Secondary dendrites that extend from the PVD neuronal cell body are disorganized and fail to form 'T' shaped tertiary dendrites, and furthermore no quaternary dendritic branches are formed." evidence="5">
    <original>G</original>
    <variation>E</variation>
    <location>
        <position position="259"/>
    </location>
</feature>
<feature type="mutagenesis site" description="In gk762721; does not cause defects in the formation of the somatosensory dendritic arbor of PVD sensory neurons." evidence="4">
    <original>D</original>
    <variation>V</variation>
    <location>
        <position position="262"/>
    </location>
</feature>
<organism evidence="9">
    <name type="scientific">Caenorhabditis elegans</name>
    <dbReference type="NCBI Taxonomy" id="6239"/>
    <lineage>
        <taxon>Eukaryota</taxon>
        <taxon>Metazoa</taxon>
        <taxon>Ecdysozoa</taxon>
        <taxon>Nematoda</taxon>
        <taxon>Chromadorea</taxon>
        <taxon>Rhabditida</taxon>
        <taxon>Rhabditina</taxon>
        <taxon>Rhabditomorpha</taxon>
        <taxon>Rhabditoidea</taxon>
        <taxon>Rhabditidae</taxon>
        <taxon>Peloderinae</taxon>
        <taxon>Caenorhabditis</taxon>
    </lineage>
</organism>
<proteinExistence type="evidence at protein level"/>
<accession>Q21241</accession>
<accession>A0A1B1LVF5</accession>
<name>LECT2_CAEEL</name>